<comment type="function">
    <text evidence="1">Catalyzes the reduction of 2,3-diketo-L-gulonate in the presence of NADH, to form 3-keto-L-gulonate.</text>
</comment>
<comment type="catalytic activity">
    <reaction evidence="1">
        <text>3-dehydro-L-gulonate + NAD(+) = 2,3-dioxo-L-gulonate + NADH + H(+)</text>
        <dbReference type="Rhea" id="RHEA:21924"/>
        <dbReference type="ChEBI" id="CHEBI:15378"/>
        <dbReference type="ChEBI" id="CHEBI:57441"/>
        <dbReference type="ChEBI" id="CHEBI:57540"/>
        <dbReference type="ChEBI" id="CHEBI:57655"/>
        <dbReference type="ChEBI" id="CHEBI:57945"/>
        <dbReference type="EC" id="1.1.1.130"/>
    </reaction>
</comment>
<comment type="catalytic activity">
    <reaction evidence="1">
        <text>3-dehydro-L-gulonate + NADP(+) = 2,3-dioxo-L-gulonate + NADPH + H(+)</text>
        <dbReference type="Rhea" id="RHEA:21928"/>
        <dbReference type="ChEBI" id="CHEBI:15378"/>
        <dbReference type="ChEBI" id="CHEBI:57441"/>
        <dbReference type="ChEBI" id="CHEBI:57655"/>
        <dbReference type="ChEBI" id="CHEBI:57783"/>
        <dbReference type="ChEBI" id="CHEBI:58349"/>
        <dbReference type="EC" id="1.1.1.130"/>
    </reaction>
</comment>
<comment type="subunit">
    <text evidence="1">Homodimer.</text>
</comment>
<comment type="subcellular location">
    <subcellularLocation>
        <location evidence="1">Cytoplasm</location>
    </subcellularLocation>
</comment>
<comment type="similarity">
    <text evidence="1">Belongs to the LDH2/MDH2 oxidoreductase family. DlgD subfamily.</text>
</comment>
<accession>B7LTI6</accession>
<reference key="1">
    <citation type="journal article" date="2009" name="PLoS Genet.">
        <title>Organised genome dynamics in the Escherichia coli species results in highly diverse adaptive paths.</title>
        <authorList>
            <person name="Touchon M."/>
            <person name="Hoede C."/>
            <person name="Tenaillon O."/>
            <person name="Barbe V."/>
            <person name="Baeriswyl S."/>
            <person name="Bidet P."/>
            <person name="Bingen E."/>
            <person name="Bonacorsi S."/>
            <person name="Bouchier C."/>
            <person name="Bouvet O."/>
            <person name="Calteau A."/>
            <person name="Chiapello H."/>
            <person name="Clermont O."/>
            <person name="Cruveiller S."/>
            <person name="Danchin A."/>
            <person name="Diard M."/>
            <person name="Dossat C."/>
            <person name="Karoui M.E."/>
            <person name="Frapy E."/>
            <person name="Garry L."/>
            <person name="Ghigo J.M."/>
            <person name="Gilles A.M."/>
            <person name="Johnson J."/>
            <person name="Le Bouguenec C."/>
            <person name="Lescat M."/>
            <person name="Mangenot S."/>
            <person name="Martinez-Jehanne V."/>
            <person name="Matic I."/>
            <person name="Nassif X."/>
            <person name="Oztas S."/>
            <person name="Petit M.A."/>
            <person name="Pichon C."/>
            <person name="Rouy Z."/>
            <person name="Ruf C.S."/>
            <person name="Schneider D."/>
            <person name="Tourret J."/>
            <person name="Vacherie B."/>
            <person name="Vallenet D."/>
            <person name="Medigue C."/>
            <person name="Rocha E.P.C."/>
            <person name="Denamur E."/>
        </authorList>
    </citation>
    <scope>NUCLEOTIDE SEQUENCE [LARGE SCALE GENOMIC DNA]</scope>
    <source>
        <strain>ATCC 35469 / DSM 13698 / BCRC 15582 / CCUG 18766 / IAM 14443 / JCM 21226 / LMG 7866 / NBRC 102419 / NCTC 12128 / CDC 0568-73</strain>
    </source>
</reference>
<sequence length="332" mass="36502">MKVSFEQLKAAFNRVLLSRGVAVETADACAEMFARTTESGVYSHGVNRFPRFIQQLDNGDIIPDAEAKRITTLGAIEQWDAQRSIGNLTAKKMMDRAIELAADHGIGLVALRNANHWMRGGSYGWQAAEKGYIGICWTNSIAVMPPWGAKECRIGTNPLIVAIPSTPITMVDMSMSMFSYGMLEVNRLAGRQLPVDGGFDDEGNLTKEPGVIEKNRRILPMGYWKGSGMSIVLDMIATLLSDGASVAEVTQDNSDEYGVSQIFIAIEVDKLIDGPTRDAKLQRIMDYVTTAERADENQAIRLPGHEFTTLLAENRRNGITVDDSVWAKIQAL</sequence>
<evidence type="ECO:0000255" key="1">
    <source>
        <dbReference type="HAMAP-Rule" id="MF_00820"/>
    </source>
</evidence>
<keyword id="KW-0963">Cytoplasm</keyword>
<keyword id="KW-0520">NAD</keyword>
<keyword id="KW-0560">Oxidoreductase</keyword>
<gene>
    <name evidence="1" type="primary">dlgD</name>
    <name type="ordered locus">EFER_3573</name>
</gene>
<proteinExistence type="inferred from homology"/>
<name>DLGD_ESCF3</name>
<feature type="chain" id="PRO_1000134344" description="2,3-diketo-L-gulonate reductase">
    <location>
        <begin position="1"/>
        <end position="332"/>
    </location>
</feature>
<feature type="active site" description="Proton donor" evidence="1">
    <location>
        <position position="44"/>
    </location>
</feature>
<feature type="binding site" evidence="1">
    <location>
        <begin position="168"/>
        <end position="174"/>
    </location>
    <ligand>
        <name>NAD(+)</name>
        <dbReference type="ChEBI" id="CHEBI:57540"/>
    </ligand>
</feature>
<feature type="binding site" evidence="1">
    <location>
        <begin position="224"/>
        <end position="225"/>
    </location>
    <ligand>
        <name>NAD(+)</name>
        <dbReference type="ChEBI" id="CHEBI:57540"/>
    </ligand>
</feature>
<feature type="binding site" evidence="1">
    <location>
        <begin position="304"/>
        <end position="306"/>
    </location>
    <ligand>
        <name>NAD(+)</name>
        <dbReference type="ChEBI" id="CHEBI:57540"/>
    </ligand>
</feature>
<organism>
    <name type="scientific">Escherichia fergusonii (strain ATCC 35469 / DSM 13698 / CCUG 18766 / IAM 14443 / JCM 21226 / LMG 7866 / NBRC 102419 / NCTC 12128 / CDC 0568-73)</name>
    <dbReference type="NCBI Taxonomy" id="585054"/>
    <lineage>
        <taxon>Bacteria</taxon>
        <taxon>Pseudomonadati</taxon>
        <taxon>Pseudomonadota</taxon>
        <taxon>Gammaproteobacteria</taxon>
        <taxon>Enterobacterales</taxon>
        <taxon>Enterobacteriaceae</taxon>
        <taxon>Escherichia</taxon>
    </lineage>
</organism>
<protein>
    <recommendedName>
        <fullName evidence="1">2,3-diketo-L-gulonate reductase</fullName>
        <shortName evidence="1">2,3-DKG reductase</shortName>
        <ecNumber evidence="1">1.1.1.130</ecNumber>
    </recommendedName>
    <alternativeName>
        <fullName evidence="1">3-dehydro-L-gulonate 2-dehydrogenase</fullName>
    </alternativeName>
</protein>
<dbReference type="EC" id="1.1.1.130" evidence="1"/>
<dbReference type="EMBL" id="CU928158">
    <property type="protein sequence ID" value="CAQ91045.1"/>
    <property type="molecule type" value="Genomic_DNA"/>
</dbReference>
<dbReference type="SMR" id="B7LTI6"/>
<dbReference type="KEGG" id="efe:EFER_3573"/>
<dbReference type="HOGENOM" id="CLU_040452_4_0_6"/>
<dbReference type="OrthoDB" id="9811519at2"/>
<dbReference type="Proteomes" id="UP000000745">
    <property type="component" value="Chromosome"/>
</dbReference>
<dbReference type="GO" id="GO:0005737">
    <property type="term" value="C:cytoplasm"/>
    <property type="evidence" value="ECO:0007669"/>
    <property type="project" value="UniProtKB-SubCell"/>
</dbReference>
<dbReference type="GO" id="GO:0047559">
    <property type="term" value="F:3-dehydro-L-gulonate 2-dehydrogenase activity"/>
    <property type="evidence" value="ECO:0007669"/>
    <property type="project" value="UniProtKB-UniRule"/>
</dbReference>
<dbReference type="GO" id="GO:0070403">
    <property type="term" value="F:NAD+ binding"/>
    <property type="evidence" value="ECO:0007669"/>
    <property type="project" value="InterPro"/>
</dbReference>
<dbReference type="Gene3D" id="1.10.1530.10">
    <property type="match status" value="1"/>
</dbReference>
<dbReference type="Gene3D" id="3.30.1370.60">
    <property type="entry name" value="Hypothetical oxidoreductase yiak, domain 2"/>
    <property type="match status" value="1"/>
</dbReference>
<dbReference type="Gene3D" id="3.30.60.50">
    <property type="entry name" value="Hypothetical oxidoreductase yiak, domain 3"/>
    <property type="match status" value="1"/>
</dbReference>
<dbReference type="HAMAP" id="MF_00820">
    <property type="entry name" value="Diketo_gul_reduc"/>
    <property type="match status" value="1"/>
</dbReference>
<dbReference type="InterPro" id="IPR023689">
    <property type="entry name" value="Diketo_gul_Rdtase"/>
</dbReference>
<dbReference type="InterPro" id="IPR043144">
    <property type="entry name" value="Mal/L-sulf/L-lact_DH-like_ah"/>
</dbReference>
<dbReference type="InterPro" id="IPR043143">
    <property type="entry name" value="Mal/L-sulf/L-lact_DH-like_NADP"/>
</dbReference>
<dbReference type="InterPro" id="IPR036111">
    <property type="entry name" value="Mal/L-sulfo/L-lacto_DH-like_sf"/>
</dbReference>
<dbReference type="InterPro" id="IPR003767">
    <property type="entry name" value="Malate/L-lactate_DH-like"/>
</dbReference>
<dbReference type="NCBIfam" id="NF009750">
    <property type="entry name" value="PRK13260.1"/>
    <property type="match status" value="1"/>
</dbReference>
<dbReference type="PANTHER" id="PTHR11091:SF3">
    <property type="entry name" value="2,3-DIKETO-L-GULONATE REDUCTASE"/>
    <property type="match status" value="1"/>
</dbReference>
<dbReference type="PANTHER" id="PTHR11091">
    <property type="entry name" value="OXIDOREDUCTASE-RELATED"/>
    <property type="match status" value="1"/>
</dbReference>
<dbReference type="Pfam" id="PF02615">
    <property type="entry name" value="Ldh_2"/>
    <property type="match status" value="1"/>
</dbReference>
<dbReference type="SUPFAM" id="SSF89733">
    <property type="entry name" value="L-sulfolactate dehydrogenase-like"/>
    <property type="match status" value="1"/>
</dbReference>